<sequence length="423" mass="46033">MTDKRKDGSGKLLYCSFCGKSQHEVRKLIAGPSVYICDECVDLCNDIIREEIKEVSPHRDRSSLPTPHEIRHHLDDYVIGQEPAKKVLAVAVYNHYKRLRNGDTSNGIELGKSNILLIGPTGSGKTLLAETLARLLDVPFTMADATTLTEAGYVGEDVENIIQKLLQKCDYDVQKAQRGIVYIDEIDKISRKSDNPSITRDVSGEGVQQALLKLIEGTIAAVPPQGGRKHPQQEFLQVDTSKILFICGGAFAGLDKVIGQRINTGSGIGFGAVVKGQSEKATEGELLSQVEPEDLIKFGLIPEFIGRLPVVATLSELSEDALIQILKEPKNALTKQYQALFSLEGVELEFRDEALTAIAKKAMARKTGARGLRSIVEGALLDTMYDLPSMDSVEKVVVDESVIAGQSAPMLIYGQPEAQASGE</sequence>
<dbReference type="EMBL" id="CP000901">
    <property type="protein sequence ID" value="ABX86065.1"/>
    <property type="molecule type" value="Genomic_DNA"/>
</dbReference>
<dbReference type="RefSeq" id="WP_002208641.1">
    <property type="nucleotide sequence ID" value="NZ_CP009935.1"/>
</dbReference>
<dbReference type="SMR" id="A9QZQ2"/>
<dbReference type="GeneID" id="96664466"/>
<dbReference type="KEGG" id="ypg:YpAngola_A3053"/>
<dbReference type="PATRIC" id="fig|349746.12.peg.4108"/>
<dbReference type="GO" id="GO:0009376">
    <property type="term" value="C:HslUV protease complex"/>
    <property type="evidence" value="ECO:0007669"/>
    <property type="project" value="TreeGrafter"/>
</dbReference>
<dbReference type="GO" id="GO:0005524">
    <property type="term" value="F:ATP binding"/>
    <property type="evidence" value="ECO:0007669"/>
    <property type="project" value="UniProtKB-UniRule"/>
</dbReference>
<dbReference type="GO" id="GO:0016887">
    <property type="term" value="F:ATP hydrolysis activity"/>
    <property type="evidence" value="ECO:0007669"/>
    <property type="project" value="InterPro"/>
</dbReference>
<dbReference type="GO" id="GO:0140662">
    <property type="term" value="F:ATP-dependent protein folding chaperone"/>
    <property type="evidence" value="ECO:0007669"/>
    <property type="project" value="InterPro"/>
</dbReference>
<dbReference type="GO" id="GO:0046983">
    <property type="term" value="F:protein dimerization activity"/>
    <property type="evidence" value="ECO:0007669"/>
    <property type="project" value="InterPro"/>
</dbReference>
<dbReference type="GO" id="GO:0051082">
    <property type="term" value="F:unfolded protein binding"/>
    <property type="evidence" value="ECO:0007669"/>
    <property type="project" value="UniProtKB-UniRule"/>
</dbReference>
<dbReference type="GO" id="GO:0008270">
    <property type="term" value="F:zinc ion binding"/>
    <property type="evidence" value="ECO:0007669"/>
    <property type="project" value="InterPro"/>
</dbReference>
<dbReference type="GO" id="GO:0051301">
    <property type="term" value="P:cell division"/>
    <property type="evidence" value="ECO:0007669"/>
    <property type="project" value="TreeGrafter"/>
</dbReference>
<dbReference type="GO" id="GO:0051603">
    <property type="term" value="P:proteolysis involved in protein catabolic process"/>
    <property type="evidence" value="ECO:0007669"/>
    <property type="project" value="TreeGrafter"/>
</dbReference>
<dbReference type="CDD" id="cd19497">
    <property type="entry name" value="RecA-like_ClpX"/>
    <property type="match status" value="1"/>
</dbReference>
<dbReference type="FunFam" id="1.10.8.60:FF:000002">
    <property type="entry name" value="ATP-dependent Clp protease ATP-binding subunit ClpX"/>
    <property type="match status" value="1"/>
</dbReference>
<dbReference type="FunFam" id="3.40.50.300:FF:000005">
    <property type="entry name" value="ATP-dependent Clp protease ATP-binding subunit ClpX"/>
    <property type="match status" value="1"/>
</dbReference>
<dbReference type="Gene3D" id="1.10.8.60">
    <property type="match status" value="1"/>
</dbReference>
<dbReference type="Gene3D" id="6.20.220.10">
    <property type="entry name" value="ClpX chaperone, C4-type zinc finger domain"/>
    <property type="match status" value="1"/>
</dbReference>
<dbReference type="Gene3D" id="3.40.50.300">
    <property type="entry name" value="P-loop containing nucleotide triphosphate hydrolases"/>
    <property type="match status" value="1"/>
</dbReference>
<dbReference type="HAMAP" id="MF_00175">
    <property type="entry name" value="ClpX"/>
    <property type="match status" value="1"/>
</dbReference>
<dbReference type="InterPro" id="IPR003593">
    <property type="entry name" value="AAA+_ATPase"/>
</dbReference>
<dbReference type="InterPro" id="IPR050052">
    <property type="entry name" value="ATP-dep_Clp_protease_ClpX"/>
</dbReference>
<dbReference type="InterPro" id="IPR003959">
    <property type="entry name" value="ATPase_AAA_core"/>
</dbReference>
<dbReference type="InterPro" id="IPR019489">
    <property type="entry name" value="Clp_ATPase_C"/>
</dbReference>
<dbReference type="InterPro" id="IPR004487">
    <property type="entry name" value="Clp_protease_ATP-bd_su_ClpX"/>
</dbReference>
<dbReference type="InterPro" id="IPR046425">
    <property type="entry name" value="ClpX_bact"/>
</dbReference>
<dbReference type="InterPro" id="IPR027417">
    <property type="entry name" value="P-loop_NTPase"/>
</dbReference>
<dbReference type="InterPro" id="IPR010603">
    <property type="entry name" value="Znf_CppX_C4"/>
</dbReference>
<dbReference type="InterPro" id="IPR038366">
    <property type="entry name" value="Znf_CppX_C4_sf"/>
</dbReference>
<dbReference type="NCBIfam" id="TIGR00382">
    <property type="entry name" value="clpX"/>
    <property type="match status" value="1"/>
</dbReference>
<dbReference type="NCBIfam" id="NF003745">
    <property type="entry name" value="PRK05342.1"/>
    <property type="match status" value="1"/>
</dbReference>
<dbReference type="PANTHER" id="PTHR48102:SF7">
    <property type="entry name" value="ATP-DEPENDENT CLP PROTEASE ATP-BINDING SUBUNIT CLPX-LIKE, MITOCHONDRIAL"/>
    <property type="match status" value="1"/>
</dbReference>
<dbReference type="PANTHER" id="PTHR48102">
    <property type="entry name" value="ATP-DEPENDENT CLP PROTEASE ATP-BINDING SUBUNIT CLPX-LIKE, MITOCHONDRIAL-RELATED"/>
    <property type="match status" value="1"/>
</dbReference>
<dbReference type="Pfam" id="PF07724">
    <property type="entry name" value="AAA_2"/>
    <property type="match status" value="1"/>
</dbReference>
<dbReference type="Pfam" id="PF10431">
    <property type="entry name" value="ClpB_D2-small"/>
    <property type="match status" value="1"/>
</dbReference>
<dbReference type="Pfam" id="PF06689">
    <property type="entry name" value="zf-C4_ClpX"/>
    <property type="match status" value="1"/>
</dbReference>
<dbReference type="SMART" id="SM00382">
    <property type="entry name" value="AAA"/>
    <property type="match status" value="1"/>
</dbReference>
<dbReference type="SMART" id="SM01086">
    <property type="entry name" value="ClpB_D2-small"/>
    <property type="match status" value="1"/>
</dbReference>
<dbReference type="SMART" id="SM00994">
    <property type="entry name" value="zf-C4_ClpX"/>
    <property type="match status" value="1"/>
</dbReference>
<dbReference type="SUPFAM" id="SSF57716">
    <property type="entry name" value="Glucocorticoid receptor-like (DNA-binding domain)"/>
    <property type="match status" value="1"/>
</dbReference>
<dbReference type="SUPFAM" id="SSF52540">
    <property type="entry name" value="P-loop containing nucleoside triphosphate hydrolases"/>
    <property type="match status" value="1"/>
</dbReference>
<dbReference type="PROSITE" id="PS51902">
    <property type="entry name" value="CLPX_ZB"/>
    <property type="match status" value="1"/>
</dbReference>
<feature type="chain" id="PRO_1000098022" description="ATP-dependent Clp protease ATP-binding subunit ClpX">
    <location>
        <begin position="1"/>
        <end position="423"/>
    </location>
</feature>
<feature type="domain" description="ClpX-type ZB" evidence="2">
    <location>
        <begin position="2"/>
        <end position="56"/>
    </location>
</feature>
<feature type="binding site" evidence="2">
    <location>
        <position position="15"/>
    </location>
    <ligand>
        <name>Zn(2+)</name>
        <dbReference type="ChEBI" id="CHEBI:29105"/>
    </ligand>
</feature>
<feature type="binding site" evidence="2">
    <location>
        <position position="18"/>
    </location>
    <ligand>
        <name>Zn(2+)</name>
        <dbReference type="ChEBI" id="CHEBI:29105"/>
    </ligand>
</feature>
<feature type="binding site" evidence="2">
    <location>
        <position position="37"/>
    </location>
    <ligand>
        <name>Zn(2+)</name>
        <dbReference type="ChEBI" id="CHEBI:29105"/>
    </ligand>
</feature>
<feature type="binding site" evidence="2">
    <location>
        <position position="40"/>
    </location>
    <ligand>
        <name>Zn(2+)</name>
        <dbReference type="ChEBI" id="CHEBI:29105"/>
    </ligand>
</feature>
<feature type="binding site" evidence="1">
    <location>
        <begin position="120"/>
        <end position="127"/>
    </location>
    <ligand>
        <name>ATP</name>
        <dbReference type="ChEBI" id="CHEBI:30616"/>
    </ligand>
</feature>
<accession>A9QZQ2</accession>
<comment type="function">
    <text evidence="1">ATP-dependent specificity component of the Clp protease. It directs the protease to specific substrates. Can perform chaperone functions in the absence of ClpP.</text>
</comment>
<comment type="subunit">
    <text evidence="1">Component of the ClpX-ClpP complex. Forms a hexameric ring that, in the presence of ATP, binds to fourteen ClpP subunits assembled into a disk-like structure with a central cavity, resembling the structure of eukaryotic proteasomes.</text>
</comment>
<comment type="similarity">
    <text evidence="1">Belongs to the ClpX chaperone family.</text>
</comment>
<evidence type="ECO:0000255" key="1">
    <source>
        <dbReference type="HAMAP-Rule" id="MF_00175"/>
    </source>
</evidence>
<evidence type="ECO:0000255" key="2">
    <source>
        <dbReference type="PROSITE-ProRule" id="PRU01250"/>
    </source>
</evidence>
<proteinExistence type="inferred from homology"/>
<organism>
    <name type="scientific">Yersinia pestis bv. Antiqua (strain Angola)</name>
    <dbReference type="NCBI Taxonomy" id="349746"/>
    <lineage>
        <taxon>Bacteria</taxon>
        <taxon>Pseudomonadati</taxon>
        <taxon>Pseudomonadota</taxon>
        <taxon>Gammaproteobacteria</taxon>
        <taxon>Enterobacterales</taxon>
        <taxon>Yersiniaceae</taxon>
        <taxon>Yersinia</taxon>
    </lineage>
</organism>
<keyword id="KW-0067">ATP-binding</keyword>
<keyword id="KW-0143">Chaperone</keyword>
<keyword id="KW-0479">Metal-binding</keyword>
<keyword id="KW-0547">Nucleotide-binding</keyword>
<keyword id="KW-0862">Zinc</keyword>
<gene>
    <name evidence="1" type="primary">clpX</name>
    <name type="ordered locus">YpAngola_A3053</name>
</gene>
<name>CLPX_YERPG</name>
<protein>
    <recommendedName>
        <fullName evidence="1">ATP-dependent Clp protease ATP-binding subunit ClpX</fullName>
    </recommendedName>
</protein>
<reference key="1">
    <citation type="journal article" date="2010" name="J. Bacteriol.">
        <title>Genome sequence of the deep-rooted Yersinia pestis strain Angola reveals new insights into the evolution and pangenome of the plague bacterium.</title>
        <authorList>
            <person name="Eppinger M."/>
            <person name="Worsham P.L."/>
            <person name="Nikolich M.P."/>
            <person name="Riley D.R."/>
            <person name="Sebastian Y."/>
            <person name="Mou S."/>
            <person name="Achtman M."/>
            <person name="Lindler L.E."/>
            <person name="Ravel J."/>
        </authorList>
    </citation>
    <scope>NUCLEOTIDE SEQUENCE [LARGE SCALE GENOMIC DNA]</scope>
    <source>
        <strain>Angola</strain>
    </source>
</reference>